<keyword id="KW-0903">Direct protein sequencing</keyword>
<keyword id="KW-0255">Endonuclease</keyword>
<keyword id="KW-0378">Hydrolase</keyword>
<keyword id="KW-0540">Nuclease</keyword>
<keyword id="KW-0680">Restriction system</keyword>
<accession>P34719</accession>
<organism>
    <name type="scientific">Moraxella bovis</name>
    <dbReference type="NCBI Taxonomy" id="476"/>
    <lineage>
        <taxon>Bacteria</taxon>
        <taxon>Pseudomonadati</taxon>
        <taxon>Pseudomonadota</taxon>
        <taxon>Gammaproteobacteria</taxon>
        <taxon>Moraxellales</taxon>
        <taxon>Moraxellaceae</taxon>
        <taxon>Moraxella</taxon>
    </lineage>
</organism>
<gene>
    <name type="primary">mboIR</name>
    <name evidence="2" type="synonym">mboB</name>
</gene>
<comment type="function">
    <text evidence="1 4">A P subtype restriction enzyme that recognizes the double-stranded unmethylated sequence 5'-GATC-3' and cleaves before G-1.</text>
</comment>
<comment type="catalytic activity">
    <reaction>
        <text>Endonucleolytic cleavage of DNA to give specific double-stranded fragments with terminal 5'-phosphates.</text>
        <dbReference type="EC" id="3.1.21.4"/>
    </reaction>
</comment>
<comment type="similarity">
    <text evidence="3">Belongs to the DpnII type II restriction endonuclease family.</text>
</comment>
<protein>
    <recommendedName>
        <fullName evidence="1">Type II restriction enzyme MboI</fullName>
        <shortName evidence="2">R.MboI</shortName>
        <ecNumber>3.1.21.4</ecNumber>
    </recommendedName>
    <alternativeName>
        <fullName>Endonuclease MboI</fullName>
    </alternativeName>
    <alternativeName>
        <fullName>Type-2 restriction enzyme MboI</fullName>
    </alternativeName>
</protein>
<feature type="chain" id="PRO_0000077330" description="Type II restriction enzyme MboI">
    <location>
        <begin position="1"/>
        <end position="280"/>
    </location>
</feature>
<evidence type="ECO:0000303" key="1">
    <source>
    </source>
</evidence>
<evidence type="ECO:0000303" key="2">
    <source>
    </source>
</evidence>
<evidence type="ECO:0000305" key="3"/>
<evidence type="ECO:0000305" key="4">
    <source>
    </source>
</evidence>
<name>T2M1_MORBO</name>
<proteinExistence type="evidence at protein level"/>
<reference key="1">
    <citation type="journal article" date="1993" name="Nucleic Acids Res.">
        <title>Gene structure and expression of the MboI restriction-modification system.</title>
        <authorList>
            <person name="Ueno T."/>
            <person name="Ito H."/>
            <person name="Kimizuka F."/>
            <person name="Kotani H."/>
            <person name="Nakajima K."/>
        </authorList>
    </citation>
    <scope>NUCLEOTIDE SEQUENCE [GENOMIC DNA]</scope>
    <scope>PROTEIN SEQUENCE OF 1-30</scope>
    <scope>FUNCTION</scope>
    <source>
        <strain>ATCC 10900 / DSM 6328 / CIP 70.40 / JCM 17254 / LMG 986 / NCTC 11013</strain>
    </source>
</reference>
<reference key="2">
    <citation type="journal article" date="2003" name="Nucleic Acids Res.">
        <title>A nomenclature for restriction enzymes, DNA methyltransferases, homing endonucleases and their genes.</title>
        <authorList>
            <person name="Roberts R.J."/>
            <person name="Belfort M."/>
            <person name="Bestor T."/>
            <person name="Bhagwat A.S."/>
            <person name="Bickle T.A."/>
            <person name="Bitinaite J."/>
            <person name="Blumenthal R.M."/>
            <person name="Degtyarev S.K."/>
            <person name="Dryden D.T."/>
            <person name="Dybvig K."/>
            <person name="Firman K."/>
            <person name="Gromova E.S."/>
            <person name="Gumport R.I."/>
            <person name="Halford S.E."/>
            <person name="Hattman S."/>
            <person name="Heitman J."/>
            <person name="Hornby D.P."/>
            <person name="Janulaitis A."/>
            <person name="Jeltsch A."/>
            <person name="Josephsen J."/>
            <person name="Kiss A."/>
            <person name="Klaenhammer T.R."/>
            <person name="Kobayashi I."/>
            <person name="Kong H."/>
            <person name="Krueger D.H."/>
            <person name="Lacks S."/>
            <person name="Marinus M.G."/>
            <person name="Miyahara M."/>
            <person name="Morgan R.D."/>
            <person name="Murray N.E."/>
            <person name="Nagaraja V."/>
            <person name="Piekarowicz A."/>
            <person name="Pingoud A."/>
            <person name="Raleigh E."/>
            <person name="Rao D.N."/>
            <person name="Reich N."/>
            <person name="Repin V.E."/>
            <person name="Selker E.U."/>
            <person name="Shaw P.C."/>
            <person name="Stein D.C."/>
            <person name="Stoddard B.L."/>
            <person name="Szybalski W."/>
            <person name="Trautner T.A."/>
            <person name="Van Etten J.L."/>
            <person name="Vitor J.M."/>
            <person name="Wilson G.G."/>
            <person name="Xu S.Y."/>
        </authorList>
    </citation>
    <scope>NOMENCLATURE</scope>
    <scope>SUBTYPE</scope>
</reference>
<sequence>MKLAFDDFLNSMSETNTTLDYFTDFDKVKKNVAQIEIHLNQLNYLLGKDDLKQAVYDLYAECPNAFSILEILIAVRKKEQKKSLDEKGQVVTLNSYFQSADKIIDFLNNTGLADVFRDKNIKNLVDYVFGIEVGLDTNARKNRGGDNMSKAVQLLFDNADIYYKKEVRNTIFTDIESLGADVKQFDFVIKTKRKTYVIETNYYNSGGSKLNEVARAYTDVAPKINQYSQYEFVWITDGQGWKTAKNKLQEAYTHIPSVYNLYTLHGFIEQLNSEGVIKDW</sequence>
<dbReference type="EC" id="3.1.21.4"/>
<dbReference type="EMBL" id="D13968">
    <property type="protein sequence ID" value="BAA03072.1"/>
    <property type="molecule type" value="Genomic_DNA"/>
</dbReference>
<dbReference type="PIR" id="S35648">
    <property type="entry name" value="S35648"/>
</dbReference>
<dbReference type="RefSeq" id="WP_078274860.1">
    <property type="nucleotide sequence ID" value="NZ_CP087765.1"/>
</dbReference>
<dbReference type="STRING" id="476.B0182_10405"/>
<dbReference type="REBASE" id="1204">
    <property type="entry name" value="MboI"/>
</dbReference>
<dbReference type="GeneID" id="77189677"/>
<dbReference type="PRO" id="PR:P34719"/>
<dbReference type="GO" id="GO:0003677">
    <property type="term" value="F:DNA binding"/>
    <property type="evidence" value="ECO:0007669"/>
    <property type="project" value="InterPro"/>
</dbReference>
<dbReference type="GO" id="GO:0009036">
    <property type="term" value="F:type II site-specific deoxyribonuclease activity"/>
    <property type="evidence" value="ECO:0007669"/>
    <property type="project" value="UniProtKB-EC"/>
</dbReference>
<dbReference type="GO" id="GO:0009307">
    <property type="term" value="P:DNA restriction-modification system"/>
    <property type="evidence" value="ECO:0007669"/>
    <property type="project" value="UniProtKB-KW"/>
</dbReference>
<dbReference type="InterPro" id="IPR011335">
    <property type="entry name" value="Restrct_endonuc-II-like"/>
</dbReference>
<dbReference type="InterPro" id="IPR021191">
    <property type="entry name" value="Restrct_endonuc_II_DpnII"/>
</dbReference>
<dbReference type="InterPro" id="IPR007637">
    <property type="entry name" value="Restrct_endonuc_II_DpnII-like"/>
</dbReference>
<dbReference type="Pfam" id="PF04556">
    <property type="entry name" value="DpnII"/>
    <property type="match status" value="1"/>
</dbReference>
<dbReference type="PIRSF" id="PIRSF016080">
    <property type="entry name" value="Restrict_endonuc_II_DpmII"/>
    <property type="match status" value="1"/>
</dbReference>
<dbReference type="SUPFAM" id="SSF52980">
    <property type="entry name" value="Restriction endonuclease-like"/>
    <property type="match status" value="1"/>
</dbReference>